<evidence type="ECO:0000255" key="1">
    <source>
        <dbReference type="HAMAP-Rule" id="MF_01346"/>
    </source>
</evidence>
<name>ATPA_RHOE4</name>
<accession>C1A1Y0</accession>
<feature type="chain" id="PRO_1000214815" description="ATP synthase subunit alpha">
    <location>
        <begin position="1"/>
        <end position="547"/>
    </location>
</feature>
<feature type="binding site" evidence="1">
    <location>
        <begin position="172"/>
        <end position="179"/>
    </location>
    <ligand>
        <name>ATP</name>
        <dbReference type="ChEBI" id="CHEBI:30616"/>
    </ligand>
</feature>
<feature type="site" description="Required for activity" evidence="1">
    <location>
        <position position="373"/>
    </location>
</feature>
<organism>
    <name type="scientific">Rhodococcus erythropolis (strain PR4 / NBRC 100887)</name>
    <dbReference type="NCBI Taxonomy" id="234621"/>
    <lineage>
        <taxon>Bacteria</taxon>
        <taxon>Bacillati</taxon>
        <taxon>Actinomycetota</taxon>
        <taxon>Actinomycetes</taxon>
        <taxon>Mycobacteriales</taxon>
        <taxon>Nocardiaceae</taxon>
        <taxon>Rhodococcus</taxon>
        <taxon>Rhodococcus erythropolis group</taxon>
    </lineage>
</organism>
<protein>
    <recommendedName>
        <fullName evidence="1">ATP synthase subunit alpha</fullName>
        <ecNumber evidence="1">7.1.2.2</ecNumber>
    </recommendedName>
    <alternativeName>
        <fullName evidence="1">ATP synthase F1 sector subunit alpha</fullName>
    </alternativeName>
    <alternativeName>
        <fullName evidence="1">F-ATPase subunit alpha</fullName>
    </alternativeName>
</protein>
<sequence>MAELTISSDEIRSAIDNYTASYSPEASREEVGTVTDTSDGIAHVSGLPSAMSNELLEFPGGIVGVALNLDATEIGAVILGDYQNIQEGQEVKRTGDVLSVPVGDAFLGRVIDPLGAPIDGLGEIESTENRALELQAASVLERQPVEEPLQTGIKAIDAMTPIGRGQRQLIIGDRKTGKTAVCIDAILNQKANWDSGDVNKQVRCIYVAIGQKGSTIAGVKAALEEKGAMEYTTIVAAPASDSAGFKWLAPYTGSAIGQHWMYQGKHVLVVFDDLTKQAEAYRAISLLLRRPPGREAYPGDVFYLHSRLLERSAKLSDALGGGSLTALPIIETKANDVSAYIPTNVISITDGQVFLESDLFNKGVRPAINVGISVSRVGGAAQTKGMKKVSGSLRLELAQFRELEAFSAFASDLDAASKAQLERGARLVELLKQDQYSPIPVEDQIVSIYLAGEGIFDSVPIGDVRRFEKELLEDLKHSAAGVYSSINGGKALDADNAAALIAATNKFKEGFIASDGSRVVNEAEADALGADEVENEQINVKRKTVSK</sequence>
<proteinExistence type="inferred from homology"/>
<dbReference type="EC" id="7.1.2.2" evidence="1"/>
<dbReference type="EMBL" id="AP008957">
    <property type="protein sequence ID" value="BAH34615.1"/>
    <property type="molecule type" value="Genomic_DNA"/>
</dbReference>
<dbReference type="RefSeq" id="WP_019749171.1">
    <property type="nucleotide sequence ID" value="NC_012490.1"/>
</dbReference>
<dbReference type="SMR" id="C1A1Y0"/>
<dbReference type="GeneID" id="57486182"/>
<dbReference type="KEGG" id="rer:RER_39070"/>
<dbReference type="eggNOG" id="COG0056">
    <property type="taxonomic scope" value="Bacteria"/>
</dbReference>
<dbReference type="HOGENOM" id="CLU_010091_2_1_11"/>
<dbReference type="Proteomes" id="UP000002204">
    <property type="component" value="Chromosome"/>
</dbReference>
<dbReference type="GO" id="GO:0005886">
    <property type="term" value="C:plasma membrane"/>
    <property type="evidence" value="ECO:0007669"/>
    <property type="project" value="UniProtKB-SubCell"/>
</dbReference>
<dbReference type="GO" id="GO:0045259">
    <property type="term" value="C:proton-transporting ATP synthase complex"/>
    <property type="evidence" value="ECO:0007669"/>
    <property type="project" value="UniProtKB-KW"/>
</dbReference>
<dbReference type="GO" id="GO:0043531">
    <property type="term" value="F:ADP binding"/>
    <property type="evidence" value="ECO:0007669"/>
    <property type="project" value="TreeGrafter"/>
</dbReference>
<dbReference type="GO" id="GO:0005524">
    <property type="term" value="F:ATP binding"/>
    <property type="evidence" value="ECO:0007669"/>
    <property type="project" value="UniProtKB-UniRule"/>
</dbReference>
<dbReference type="GO" id="GO:0046933">
    <property type="term" value="F:proton-transporting ATP synthase activity, rotational mechanism"/>
    <property type="evidence" value="ECO:0007669"/>
    <property type="project" value="UniProtKB-UniRule"/>
</dbReference>
<dbReference type="CDD" id="cd18113">
    <property type="entry name" value="ATP-synt_F1_alpha_C"/>
    <property type="match status" value="1"/>
</dbReference>
<dbReference type="CDD" id="cd18116">
    <property type="entry name" value="ATP-synt_F1_alpha_N"/>
    <property type="match status" value="1"/>
</dbReference>
<dbReference type="CDD" id="cd01132">
    <property type="entry name" value="F1-ATPase_alpha_CD"/>
    <property type="match status" value="1"/>
</dbReference>
<dbReference type="FunFam" id="1.20.150.20:FF:000001">
    <property type="entry name" value="ATP synthase subunit alpha"/>
    <property type="match status" value="1"/>
</dbReference>
<dbReference type="FunFam" id="3.40.50.300:FF:000002">
    <property type="entry name" value="ATP synthase subunit alpha"/>
    <property type="match status" value="1"/>
</dbReference>
<dbReference type="Gene3D" id="2.40.30.20">
    <property type="match status" value="1"/>
</dbReference>
<dbReference type="Gene3D" id="1.20.150.20">
    <property type="entry name" value="ATP synthase alpha/beta chain, C-terminal domain"/>
    <property type="match status" value="1"/>
</dbReference>
<dbReference type="Gene3D" id="3.40.50.300">
    <property type="entry name" value="P-loop containing nucleotide triphosphate hydrolases"/>
    <property type="match status" value="1"/>
</dbReference>
<dbReference type="HAMAP" id="MF_01346">
    <property type="entry name" value="ATP_synth_alpha_bact"/>
    <property type="match status" value="1"/>
</dbReference>
<dbReference type="InterPro" id="IPR023366">
    <property type="entry name" value="ATP_synth_asu-like_sf"/>
</dbReference>
<dbReference type="InterPro" id="IPR000793">
    <property type="entry name" value="ATP_synth_asu_C"/>
</dbReference>
<dbReference type="InterPro" id="IPR038376">
    <property type="entry name" value="ATP_synth_asu_C_sf"/>
</dbReference>
<dbReference type="InterPro" id="IPR033732">
    <property type="entry name" value="ATP_synth_F1_a_nt-bd_dom"/>
</dbReference>
<dbReference type="InterPro" id="IPR005294">
    <property type="entry name" value="ATP_synth_F1_asu"/>
</dbReference>
<dbReference type="InterPro" id="IPR020003">
    <property type="entry name" value="ATPase_a/bsu_AS"/>
</dbReference>
<dbReference type="InterPro" id="IPR004100">
    <property type="entry name" value="ATPase_F1/V1/A1_a/bsu_N"/>
</dbReference>
<dbReference type="InterPro" id="IPR036121">
    <property type="entry name" value="ATPase_F1/V1/A1_a/bsu_N_sf"/>
</dbReference>
<dbReference type="InterPro" id="IPR000194">
    <property type="entry name" value="ATPase_F1/V1/A1_a/bsu_nucl-bd"/>
</dbReference>
<dbReference type="InterPro" id="IPR027417">
    <property type="entry name" value="P-loop_NTPase"/>
</dbReference>
<dbReference type="NCBIfam" id="TIGR00962">
    <property type="entry name" value="atpA"/>
    <property type="match status" value="1"/>
</dbReference>
<dbReference type="NCBIfam" id="NF009884">
    <property type="entry name" value="PRK13343.1"/>
    <property type="match status" value="1"/>
</dbReference>
<dbReference type="PANTHER" id="PTHR48082">
    <property type="entry name" value="ATP SYNTHASE SUBUNIT ALPHA, MITOCHONDRIAL"/>
    <property type="match status" value="1"/>
</dbReference>
<dbReference type="PANTHER" id="PTHR48082:SF2">
    <property type="entry name" value="ATP SYNTHASE SUBUNIT ALPHA, MITOCHONDRIAL"/>
    <property type="match status" value="1"/>
</dbReference>
<dbReference type="Pfam" id="PF00006">
    <property type="entry name" value="ATP-synt_ab"/>
    <property type="match status" value="1"/>
</dbReference>
<dbReference type="Pfam" id="PF00306">
    <property type="entry name" value="ATP-synt_ab_C"/>
    <property type="match status" value="1"/>
</dbReference>
<dbReference type="Pfam" id="PF02874">
    <property type="entry name" value="ATP-synt_ab_N"/>
    <property type="match status" value="1"/>
</dbReference>
<dbReference type="SUPFAM" id="SSF47917">
    <property type="entry name" value="C-terminal domain of alpha and beta subunits of F1 ATP synthase"/>
    <property type="match status" value="1"/>
</dbReference>
<dbReference type="SUPFAM" id="SSF50615">
    <property type="entry name" value="N-terminal domain of alpha and beta subunits of F1 ATP synthase"/>
    <property type="match status" value="1"/>
</dbReference>
<dbReference type="SUPFAM" id="SSF52540">
    <property type="entry name" value="P-loop containing nucleoside triphosphate hydrolases"/>
    <property type="match status" value="1"/>
</dbReference>
<dbReference type="PROSITE" id="PS00152">
    <property type="entry name" value="ATPASE_ALPHA_BETA"/>
    <property type="match status" value="1"/>
</dbReference>
<reference key="1">
    <citation type="submission" date="2005-03" db="EMBL/GenBank/DDBJ databases">
        <title>Comparison of the complete genome sequences of Rhodococcus erythropolis PR4 and Rhodococcus opacus B4.</title>
        <authorList>
            <person name="Takarada H."/>
            <person name="Sekine M."/>
            <person name="Hosoyama A."/>
            <person name="Yamada R."/>
            <person name="Fujisawa T."/>
            <person name="Omata S."/>
            <person name="Shimizu A."/>
            <person name="Tsukatani N."/>
            <person name="Tanikawa S."/>
            <person name="Fujita N."/>
            <person name="Harayama S."/>
        </authorList>
    </citation>
    <scope>NUCLEOTIDE SEQUENCE [LARGE SCALE GENOMIC DNA]</scope>
    <source>
        <strain>PR4 / NBRC 100887</strain>
    </source>
</reference>
<comment type="function">
    <text evidence="1">Produces ATP from ADP in the presence of a proton gradient across the membrane. The alpha chain is a regulatory subunit.</text>
</comment>
<comment type="catalytic activity">
    <reaction evidence="1">
        <text>ATP + H2O + 4 H(+)(in) = ADP + phosphate + 5 H(+)(out)</text>
        <dbReference type="Rhea" id="RHEA:57720"/>
        <dbReference type="ChEBI" id="CHEBI:15377"/>
        <dbReference type="ChEBI" id="CHEBI:15378"/>
        <dbReference type="ChEBI" id="CHEBI:30616"/>
        <dbReference type="ChEBI" id="CHEBI:43474"/>
        <dbReference type="ChEBI" id="CHEBI:456216"/>
        <dbReference type="EC" id="7.1.2.2"/>
    </reaction>
</comment>
<comment type="subunit">
    <text evidence="1">F-type ATPases have 2 components, CF(1) - the catalytic core - and CF(0) - the membrane proton channel. CF(1) has five subunits: alpha(3), beta(3), gamma(1), delta(1), epsilon(1). CF(0) has three main subunits: a(1), b(2) and c(9-12). The alpha and beta chains form an alternating ring which encloses part of the gamma chain. CF(1) is attached to CF(0) by a central stalk formed by the gamma and epsilon chains, while a peripheral stalk is formed by the delta and b chains.</text>
</comment>
<comment type="subcellular location">
    <subcellularLocation>
        <location evidence="1">Cell membrane</location>
        <topology evidence="1">Peripheral membrane protein</topology>
    </subcellularLocation>
</comment>
<comment type="similarity">
    <text evidence="1">Belongs to the ATPase alpha/beta chains family.</text>
</comment>
<keyword id="KW-0066">ATP synthesis</keyword>
<keyword id="KW-0067">ATP-binding</keyword>
<keyword id="KW-1003">Cell membrane</keyword>
<keyword id="KW-0139">CF(1)</keyword>
<keyword id="KW-0375">Hydrogen ion transport</keyword>
<keyword id="KW-0406">Ion transport</keyword>
<keyword id="KW-0472">Membrane</keyword>
<keyword id="KW-0547">Nucleotide-binding</keyword>
<keyword id="KW-1278">Translocase</keyword>
<keyword id="KW-0813">Transport</keyword>
<gene>
    <name evidence="1" type="primary">atpA</name>
    <name type="ordered locus">RER_39070</name>
</gene>